<reference key="1">
    <citation type="journal article" date="2002" name="Proc. Natl. Acad. Sci. U.S.A.">
        <title>Genome sequence of Streptococcus mutans UA159, a cariogenic dental pathogen.</title>
        <authorList>
            <person name="Ajdic D.J."/>
            <person name="McShan W.M."/>
            <person name="McLaughlin R.E."/>
            <person name="Savic G."/>
            <person name="Chang J."/>
            <person name="Carson M.B."/>
            <person name="Primeaux C."/>
            <person name="Tian R."/>
            <person name="Kenton S."/>
            <person name="Jia H.G."/>
            <person name="Lin S.P."/>
            <person name="Qian Y."/>
            <person name="Li S."/>
            <person name="Zhu H."/>
            <person name="Najar F.Z."/>
            <person name="Lai H."/>
            <person name="White J."/>
            <person name="Roe B.A."/>
            <person name="Ferretti J.J."/>
        </authorList>
    </citation>
    <scope>NUCLEOTIDE SEQUENCE [LARGE SCALE GENOMIC DNA]</scope>
    <source>
        <strain>ATCC 700610 / UA159</strain>
    </source>
</reference>
<feature type="chain" id="PRO_0000329868" description="Polyribonucleotide nucleotidyltransferase">
    <location>
        <begin position="1"/>
        <end position="730"/>
    </location>
</feature>
<feature type="domain" description="KH" evidence="1">
    <location>
        <begin position="556"/>
        <end position="615"/>
    </location>
</feature>
<feature type="domain" description="S1 motif" evidence="1">
    <location>
        <begin position="625"/>
        <end position="693"/>
    </location>
</feature>
<feature type="region of interest" description="Disordered" evidence="2">
    <location>
        <begin position="691"/>
        <end position="730"/>
    </location>
</feature>
<feature type="compositionally biased region" description="Basic and acidic residues" evidence="2">
    <location>
        <begin position="700"/>
        <end position="730"/>
    </location>
</feature>
<feature type="binding site" evidence="1">
    <location>
        <position position="489"/>
    </location>
    <ligand>
        <name>Mg(2+)</name>
        <dbReference type="ChEBI" id="CHEBI:18420"/>
    </ligand>
</feature>
<feature type="binding site" evidence="1">
    <location>
        <position position="495"/>
    </location>
    <ligand>
        <name>Mg(2+)</name>
        <dbReference type="ChEBI" id="CHEBI:18420"/>
    </ligand>
</feature>
<feature type="helix" evidence="3">
    <location>
        <begin position="238"/>
        <end position="257"/>
    </location>
</feature>
<feature type="helix" evidence="3">
    <location>
        <begin position="261"/>
        <end position="283"/>
    </location>
</feature>
<feature type="helix" evidence="3">
    <location>
        <begin position="289"/>
        <end position="311"/>
    </location>
</feature>
<sequence length="730" mass="80055">MSKQVFETIFAGKKLAVEIGQVAKQANGAALVRYGDSTVLSAAVMSKKMSTGDFFPLQINYEEKRYAAGKFPGGFNKREGRPSTDATLTARLIDRPIRPMFAEGFRNEVQVINTVLSYDADASAPMAAMFGSSLALSISDIPFNGPIAGVQVAYLDGQYVINPTAEEKKASLLELTVAGTKEAINMVESGAKELSEDIMLEALLKGHEAVRELIAFQEEIIAAVGKEKAEVELLQVDADLQAEIVGKYNADLQKAVQIEEKKAREIATEAVKEHVTAEYEERYAEHEEHDRIMRDVAEILEQMEHAEVRRLITEDKVRPDGRRVDEIRPLDAEIDFLPKVHGSGLFTRGQTQALSVLTLAPMGDTQIVDGLDEEYKKRFMHHYNFPQYSVGETGRYGAPGRREIGHGALGERALAQVLPSLEAFPYAIRLVAEVLESNGSSSQASICAGTLALMAGGVPIKAPVAGIAMGLISDGTNYTVLTDIQGLEDHFGDMDFKVAGTREGITALQMDIKIEGITPQILEEALAQAKKARFEILDVIEKVIPAPRLELAPTAPKIDTIKVDVDKIKIVIGKGGETIDKIIEETGVKIDIDEDGNIAIYSSDQEAINRTKEIIASLVREAKVGEIYEAEVVRIEKFGAFVHLFDKTDALVHISEIAWTRTNKVEDVLAVGDKVTVKVVKVDDKGRIDASMKALLPRPPRSEKSNKEDHQSVRHHGSPKDDKGKEKYDK</sequence>
<keyword id="KW-0002">3D-structure</keyword>
<keyword id="KW-0963">Cytoplasm</keyword>
<keyword id="KW-0460">Magnesium</keyword>
<keyword id="KW-0479">Metal-binding</keyword>
<keyword id="KW-0548">Nucleotidyltransferase</keyword>
<keyword id="KW-1185">Reference proteome</keyword>
<keyword id="KW-0694">RNA-binding</keyword>
<keyword id="KW-0808">Transferase</keyword>
<accession>Q8DWB2</accession>
<dbReference type="EC" id="2.7.7.8" evidence="1"/>
<dbReference type="EMBL" id="AE014133">
    <property type="protein sequence ID" value="AAN57931.1"/>
    <property type="molecule type" value="Genomic_DNA"/>
</dbReference>
<dbReference type="RefSeq" id="NP_720625.1">
    <property type="nucleotide sequence ID" value="NC_004350.2"/>
</dbReference>
<dbReference type="RefSeq" id="WP_002263007.1">
    <property type="nucleotide sequence ID" value="NC_004350.2"/>
</dbReference>
<dbReference type="PDB" id="3H36">
    <property type="method" value="X-ray"/>
    <property type="resolution" value="1.80 A"/>
    <property type="chains" value="A=231-320"/>
</dbReference>
<dbReference type="PDBsum" id="3H36"/>
<dbReference type="SMR" id="Q8DWB2"/>
<dbReference type="STRING" id="210007.SMU_155"/>
<dbReference type="KEGG" id="smu:SMU_155"/>
<dbReference type="PATRIC" id="fig|210007.7.peg.132"/>
<dbReference type="eggNOG" id="COG1185">
    <property type="taxonomic scope" value="Bacteria"/>
</dbReference>
<dbReference type="HOGENOM" id="CLU_004217_2_2_9"/>
<dbReference type="OrthoDB" id="9804305at2"/>
<dbReference type="PhylomeDB" id="Q8DWB2"/>
<dbReference type="EvolutionaryTrace" id="Q8DWB2"/>
<dbReference type="Proteomes" id="UP000002512">
    <property type="component" value="Chromosome"/>
</dbReference>
<dbReference type="GO" id="GO:0005829">
    <property type="term" value="C:cytosol"/>
    <property type="evidence" value="ECO:0007669"/>
    <property type="project" value="TreeGrafter"/>
</dbReference>
<dbReference type="GO" id="GO:0000175">
    <property type="term" value="F:3'-5'-RNA exonuclease activity"/>
    <property type="evidence" value="ECO:0007669"/>
    <property type="project" value="TreeGrafter"/>
</dbReference>
<dbReference type="GO" id="GO:0000287">
    <property type="term" value="F:magnesium ion binding"/>
    <property type="evidence" value="ECO:0007669"/>
    <property type="project" value="UniProtKB-UniRule"/>
</dbReference>
<dbReference type="GO" id="GO:0004654">
    <property type="term" value="F:polyribonucleotide nucleotidyltransferase activity"/>
    <property type="evidence" value="ECO:0007669"/>
    <property type="project" value="UniProtKB-UniRule"/>
</dbReference>
<dbReference type="GO" id="GO:0003723">
    <property type="term" value="F:RNA binding"/>
    <property type="evidence" value="ECO:0007669"/>
    <property type="project" value="UniProtKB-UniRule"/>
</dbReference>
<dbReference type="GO" id="GO:0006402">
    <property type="term" value="P:mRNA catabolic process"/>
    <property type="evidence" value="ECO:0007669"/>
    <property type="project" value="UniProtKB-UniRule"/>
</dbReference>
<dbReference type="GO" id="GO:0006396">
    <property type="term" value="P:RNA processing"/>
    <property type="evidence" value="ECO:0007669"/>
    <property type="project" value="InterPro"/>
</dbReference>
<dbReference type="CDD" id="cd02393">
    <property type="entry name" value="KH-I_PNPase"/>
    <property type="match status" value="1"/>
</dbReference>
<dbReference type="CDD" id="cd11363">
    <property type="entry name" value="RNase_PH_PNPase_1"/>
    <property type="match status" value="1"/>
</dbReference>
<dbReference type="CDD" id="cd11364">
    <property type="entry name" value="RNase_PH_PNPase_2"/>
    <property type="match status" value="1"/>
</dbReference>
<dbReference type="FunFam" id="2.40.50.140:FF:000023">
    <property type="entry name" value="Polyribonucleotide nucleotidyltransferase"/>
    <property type="match status" value="1"/>
</dbReference>
<dbReference type="FunFam" id="3.30.1370.10:FF:000001">
    <property type="entry name" value="Polyribonucleotide nucleotidyltransferase"/>
    <property type="match status" value="1"/>
</dbReference>
<dbReference type="FunFam" id="3.30.230.70:FF:000001">
    <property type="entry name" value="Polyribonucleotide nucleotidyltransferase"/>
    <property type="match status" value="1"/>
</dbReference>
<dbReference type="FunFam" id="3.30.230.70:FF:000002">
    <property type="entry name" value="Polyribonucleotide nucleotidyltransferase"/>
    <property type="match status" value="1"/>
</dbReference>
<dbReference type="Gene3D" id="3.30.230.70">
    <property type="entry name" value="GHMP Kinase, N-terminal domain"/>
    <property type="match status" value="2"/>
</dbReference>
<dbReference type="Gene3D" id="3.30.1370.10">
    <property type="entry name" value="K Homology domain, type 1"/>
    <property type="match status" value="1"/>
</dbReference>
<dbReference type="Gene3D" id="2.40.50.140">
    <property type="entry name" value="Nucleic acid-binding proteins"/>
    <property type="match status" value="1"/>
</dbReference>
<dbReference type="HAMAP" id="MF_01595">
    <property type="entry name" value="PNPase"/>
    <property type="match status" value="1"/>
</dbReference>
<dbReference type="InterPro" id="IPR001247">
    <property type="entry name" value="ExoRNase_PH_dom1"/>
</dbReference>
<dbReference type="InterPro" id="IPR015847">
    <property type="entry name" value="ExoRNase_PH_dom2"/>
</dbReference>
<dbReference type="InterPro" id="IPR036345">
    <property type="entry name" value="ExoRNase_PH_dom2_sf"/>
</dbReference>
<dbReference type="InterPro" id="IPR004087">
    <property type="entry name" value="KH_dom"/>
</dbReference>
<dbReference type="InterPro" id="IPR004088">
    <property type="entry name" value="KH_dom_type_1"/>
</dbReference>
<dbReference type="InterPro" id="IPR036612">
    <property type="entry name" value="KH_dom_type_1_sf"/>
</dbReference>
<dbReference type="InterPro" id="IPR012340">
    <property type="entry name" value="NA-bd_OB-fold"/>
</dbReference>
<dbReference type="InterPro" id="IPR012162">
    <property type="entry name" value="PNPase"/>
</dbReference>
<dbReference type="InterPro" id="IPR027408">
    <property type="entry name" value="PNPase/RNase_PH_dom_sf"/>
</dbReference>
<dbReference type="InterPro" id="IPR015848">
    <property type="entry name" value="PNPase_PH_RNA-bd_bac/org-type"/>
</dbReference>
<dbReference type="InterPro" id="IPR036456">
    <property type="entry name" value="PNPase_PH_RNA-bd_sf"/>
</dbReference>
<dbReference type="InterPro" id="IPR020568">
    <property type="entry name" value="Ribosomal_Su5_D2-typ_SF"/>
</dbReference>
<dbReference type="InterPro" id="IPR003029">
    <property type="entry name" value="S1_domain"/>
</dbReference>
<dbReference type="NCBIfam" id="TIGR03591">
    <property type="entry name" value="polynuc_phos"/>
    <property type="match status" value="1"/>
</dbReference>
<dbReference type="NCBIfam" id="NF008805">
    <property type="entry name" value="PRK11824.1"/>
    <property type="match status" value="1"/>
</dbReference>
<dbReference type="PANTHER" id="PTHR11252">
    <property type="entry name" value="POLYRIBONUCLEOTIDE NUCLEOTIDYLTRANSFERASE"/>
    <property type="match status" value="1"/>
</dbReference>
<dbReference type="PANTHER" id="PTHR11252:SF0">
    <property type="entry name" value="POLYRIBONUCLEOTIDE NUCLEOTIDYLTRANSFERASE 1, MITOCHONDRIAL"/>
    <property type="match status" value="1"/>
</dbReference>
<dbReference type="Pfam" id="PF00013">
    <property type="entry name" value="KH_1"/>
    <property type="match status" value="1"/>
</dbReference>
<dbReference type="Pfam" id="PF03726">
    <property type="entry name" value="PNPase"/>
    <property type="match status" value="1"/>
</dbReference>
<dbReference type="Pfam" id="PF01138">
    <property type="entry name" value="RNase_PH"/>
    <property type="match status" value="2"/>
</dbReference>
<dbReference type="Pfam" id="PF03725">
    <property type="entry name" value="RNase_PH_C"/>
    <property type="match status" value="2"/>
</dbReference>
<dbReference type="Pfam" id="PF00575">
    <property type="entry name" value="S1"/>
    <property type="match status" value="1"/>
</dbReference>
<dbReference type="PIRSF" id="PIRSF005499">
    <property type="entry name" value="PNPase"/>
    <property type="match status" value="1"/>
</dbReference>
<dbReference type="SMART" id="SM00322">
    <property type="entry name" value="KH"/>
    <property type="match status" value="1"/>
</dbReference>
<dbReference type="SMART" id="SM00316">
    <property type="entry name" value="S1"/>
    <property type="match status" value="1"/>
</dbReference>
<dbReference type="SUPFAM" id="SSF54791">
    <property type="entry name" value="Eukaryotic type KH-domain (KH-domain type I)"/>
    <property type="match status" value="1"/>
</dbReference>
<dbReference type="SUPFAM" id="SSF50249">
    <property type="entry name" value="Nucleic acid-binding proteins"/>
    <property type="match status" value="1"/>
</dbReference>
<dbReference type="SUPFAM" id="SSF46915">
    <property type="entry name" value="Polynucleotide phosphorylase/guanosine pentaphosphate synthase (PNPase/GPSI), domain 3"/>
    <property type="match status" value="1"/>
</dbReference>
<dbReference type="SUPFAM" id="SSF55666">
    <property type="entry name" value="Ribonuclease PH domain 2-like"/>
    <property type="match status" value="2"/>
</dbReference>
<dbReference type="SUPFAM" id="SSF54211">
    <property type="entry name" value="Ribosomal protein S5 domain 2-like"/>
    <property type="match status" value="2"/>
</dbReference>
<dbReference type="PROSITE" id="PS50084">
    <property type="entry name" value="KH_TYPE_1"/>
    <property type="match status" value="1"/>
</dbReference>
<dbReference type="PROSITE" id="PS50126">
    <property type="entry name" value="S1"/>
    <property type="match status" value="1"/>
</dbReference>
<comment type="function">
    <text evidence="1">Involved in mRNA degradation. Catalyzes the phosphorolysis of single-stranded polyribonucleotides processively in the 3'- to 5'-direction.</text>
</comment>
<comment type="catalytic activity">
    <reaction evidence="1">
        <text>RNA(n+1) + phosphate = RNA(n) + a ribonucleoside 5'-diphosphate</text>
        <dbReference type="Rhea" id="RHEA:22096"/>
        <dbReference type="Rhea" id="RHEA-COMP:14527"/>
        <dbReference type="Rhea" id="RHEA-COMP:17342"/>
        <dbReference type="ChEBI" id="CHEBI:43474"/>
        <dbReference type="ChEBI" id="CHEBI:57930"/>
        <dbReference type="ChEBI" id="CHEBI:140395"/>
        <dbReference type="EC" id="2.7.7.8"/>
    </reaction>
</comment>
<comment type="cofactor">
    <cofactor evidence="1">
        <name>Mg(2+)</name>
        <dbReference type="ChEBI" id="CHEBI:18420"/>
    </cofactor>
</comment>
<comment type="subcellular location">
    <subcellularLocation>
        <location evidence="1">Cytoplasm</location>
    </subcellularLocation>
</comment>
<comment type="similarity">
    <text evidence="1">Belongs to the polyribonucleotide nucleotidyltransferase family.</text>
</comment>
<gene>
    <name evidence="1" type="primary">pnp</name>
    <name type="ordered locus">SMU_155</name>
</gene>
<evidence type="ECO:0000255" key="1">
    <source>
        <dbReference type="HAMAP-Rule" id="MF_01595"/>
    </source>
</evidence>
<evidence type="ECO:0000256" key="2">
    <source>
        <dbReference type="SAM" id="MobiDB-lite"/>
    </source>
</evidence>
<evidence type="ECO:0007829" key="3">
    <source>
        <dbReference type="PDB" id="3H36"/>
    </source>
</evidence>
<name>PNP_STRMU</name>
<protein>
    <recommendedName>
        <fullName evidence="1">Polyribonucleotide nucleotidyltransferase</fullName>
        <ecNumber evidence="1">2.7.7.8</ecNumber>
    </recommendedName>
    <alternativeName>
        <fullName evidence="1">Polynucleotide phosphorylase</fullName>
        <shortName evidence="1">PNPase</shortName>
    </alternativeName>
</protein>
<proteinExistence type="evidence at protein level"/>
<organism>
    <name type="scientific">Streptococcus mutans serotype c (strain ATCC 700610 / UA159)</name>
    <dbReference type="NCBI Taxonomy" id="210007"/>
    <lineage>
        <taxon>Bacteria</taxon>
        <taxon>Bacillati</taxon>
        <taxon>Bacillota</taxon>
        <taxon>Bacilli</taxon>
        <taxon>Lactobacillales</taxon>
        <taxon>Streptococcaceae</taxon>
        <taxon>Streptococcus</taxon>
    </lineage>
</organism>